<feature type="chain" id="PRO_0000076786" description="3-isopropylmalate dehydratase large subunit">
    <location>
        <begin position="1"/>
        <end position="477"/>
    </location>
</feature>
<feature type="binding site" evidence="1">
    <location>
        <position position="352"/>
    </location>
    <ligand>
        <name>[4Fe-4S] cluster</name>
        <dbReference type="ChEBI" id="CHEBI:49883"/>
    </ligand>
</feature>
<feature type="binding site" evidence="1">
    <location>
        <position position="413"/>
    </location>
    <ligand>
        <name>[4Fe-4S] cluster</name>
        <dbReference type="ChEBI" id="CHEBI:49883"/>
    </ligand>
</feature>
<feature type="binding site" evidence="1">
    <location>
        <position position="416"/>
    </location>
    <ligand>
        <name>[4Fe-4S] cluster</name>
        <dbReference type="ChEBI" id="CHEBI:49883"/>
    </ligand>
</feature>
<comment type="function">
    <text evidence="1">Catalyzes the isomerization between 2-isopropylmalate and 3-isopropylmalate, via the formation of 2-isopropylmaleate.</text>
</comment>
<comment type="catalytic activity">
    <reaction evidence="1">
        <text>(2R,3S)-3-isopropylmalate = (2S)-2-isopropylmalate</text>
        <dbReference type="Rhea" id="RHEA:32287"/>
        <dbReference type="ChEBI" id="CHEBI:1178"/>
        <dbReference type="ChEBI" id="CHEBI:35121"/>
        <dbReference type="EC" id="4.2.1.33"/>
    </reaction>
</comment>
<comment type="cofactor">
    <cofactor evidence="1">
        <name>[4Fe-4S] cluster</name>
        <dbReference type="ChEBI" id="CHEBI:49883"/>
    </cofactor>
    <text evidence="1">Binds 1 [4Fe-4S] cluster per subunit.</text>
</comment>
<comment type="pathway">
    <text evidence="1">Amino-acid biosynthesis; L-leucine biosynthesis; L-leucine from 3-methyl-2-oxobutanoate: step 2/4.</text>
</comment>
<comment type="subunit">
    <text evidence="1">Heterodimer of LeuC and LeuD.</text>
</comment>
<comment type="similarity">
    <text evidence="1">Belongs to the aconitase/IPM isomerase family. LeuC type 1 subfamily.</text>
</comment>
<protein>
    <recommendedName>
        <fullName evidence="1">3-isopropylmalate dehydratase large subunit</fullName>
        <ecNumber evidence="1">4.2.1.33</ecNumber>
    </recommendedName>
    <alternativeName>
        <fullName evidence="1">Alpha-IPM isomerase</fullName>
        <shortName evidence="1">IPMI</shortName>
    </alternativeName>
    <alternativeName>
        <fullName evidence="1">Isopropylmalate isomerase</fullName>
    </alternativeName>
</protein>
<sequence length="477" mass="51255">MAGKTLYDKLWEAHEVKRRDDGSSLIYIDRHIIHEVTSPQAFEGLRLANRKPWRIDANIATPDHNVPTTPERKGGIEAIVDQVSRLQVQTLDENCDEYGIVEFKMNDERQGIVHVISPEQGATLPGMTVVCGDSHTSTHGAFGALAHGIGTSEVEHVLATQCLVAKKMKNMLVRVEGQLPAGVTAKDIVLAVIGKIGTAGGNGHAMEFAGSAIRELSMEGRMTICNMSIEAGARVGLVATDATTVAYVEGRPYAPKGEQWKQAVESWKDLVSDDDAVFDTVVELDASQIKPQVSWGTSPEMVLAVDQRVPDPAAETDLVKRGSIERALKYMGLTANQAITDIKLDRVFIGSCTNSRIEDLRAAAEIAKGRKVAASVKQAIVVPGSGLVKAQAEREGLDKIFLEAGFEWREPGCSMCLAMNPDRLESGEHCASTSNRNFEGRQGAGGRTHLVSPAMAAAAAVAGHFIDVRELIQGSAA</sequence>
<evidence type="ECO:0000255" key="1">
    <source>
        <dbReference type="HAMAP-Rule" id="MF_01026"/>
    </source>
</evidence>
<proteinExistence type="inferred from homology"/>
<accession>Q88LE8</accession>
<gene>
    <name evidence="1" type="primary">leuC</name>
    <name type="ordered locus">PP_1985</name>
</gene>
<dbReference type="EC" id="4.2.1.33" evidence="1"/>
<dbReference type="EMBL" id="AE015451">
    <property type="protein sequence ID" value="AAN67600.1"/>
    <property type="molecule type" value="Genomic_DNA"/>
</dbReference>
<dbReference type="RefSeq" id="NP_744136.1">
    <property type="nucleotide sequence ID" value="NC_002947.4"/>
</dbReference>
<dbReference type="RefSeq" id="WP_010953002.1">
    <property type="nucleotide sequence ID" value="NZ_CP169744.1"/>
</dbReference>
<dbReference type="SMR" id="Q88LE8"/>
<dbReference type="STRING" id="160488.PP_1985"/>
<dbReference type="PaxDb" id="160488-PP_1985"/>
<dbReference type="GeneID" id="83681510"/>
<dbReference type="KEGG" id="ppu:PP_1985"/>
<dbReference type="PATRIC" id="fig|160488.4.peg.2094"/>
<dbReference type="eggNOG" id="COG0065">
    <property type="taxonomic scope" value="Bacteria"/>
</dbReference>
<dbReference type="HOGENOM" id="CLU_006714_3_4_6"/>
<dbReference type="OrthoDB" id="9802769at2"/>
<dbReference type="PhylomeDB" id="Q88LE8"/>
<dbReference type="BioCyc" id="PPUT160488:G1G01-2116-MONOMER"/>
<dbReference type="UniPathway" id="UPA00048">
    <property type="reaction ID" value="UER00071"/>
</dbReference>
<dbReference type="Proteomes" id="UP000000556">
    <property type="component" value="Chromosome"/>
</dbReference>
<dbReference type="GO" id="GO:0003861">
    <property type="term" value="F:3-isopropylmalate dehydratase activity"/>
    <property type="evidence" value="ECO:0007669"/>
    <property type="project" value="UniProtKB-UniRule"/>
</dbReference>
<dbReference type="GO" id="GO:0051539">
    <property type="term" value="F:4 iron, 4 sulfur cluster binding"/>
    <property type="evidence" value="ECO:0007669"/>
    <property type="project" value="UniProtKB-KW"/>
</dbReference>
<dbReference type="GO" id="GO:0046872">
    <property type="term" value="F:metal ion binding"/>
    <property type="evidence" value="ECO:0007669"/>
    <property type="project" value="UniProtKB-KW"/>
</dbReference>
<dbReference type="GO" id="GO:0009098">
    <property type="term" value="P:L-leucine biosynthetic process"/>
    <property type="evidence" value="ECO:0007669"/>
    <property type="project" value="UniProtKB-UniRule"/>
</dbReference>
<dbReference type="CDD" id="cd01583">
    <property type="entry name" value="IPMI"/>
    <property type="match status" value="1"/>
</dbReference>
<dbReference type="FunFam" id="3.30.499.10:FF:000007">
    <property type="entry name" value="3-isopropylmalate dehydratase large subunit"/>
    <property type="match status" value="1"/>
</dbReference>
<dbReference type="Gene3D" id="3.30.499.10">
    <property type="entry name" value="Aconitase, domain 3"/>
    <property type="match status" value="2"/>
</dbReference>
<dbReference type="HAMAP" id="MF_01026">
    <property type="entry name" value="LeuC_type1"/>
    <property type="match status" value="1"/>
</dbReference>
<dbReference type="InterPro" id="IPR004430">
    <property type="entry name" value="3-IsopropMal_deHydase_lsu"/>
</dbReference>
<dbReference type="InterPro" id="IPR015931">
    <property type="entry name" value="Acnase/IPM_dHydase_lsu_aba_1/3"/>
</dbReference>
<dbReference type="InterPro" id="IPR001030">
    <property type="entry name" value="Acoase/IPM_deHydtase_lsu_aba"/>
</dbReference>
<dbReference type="InterPro" id="IPR018136">
    <property type="entry name" value="Aconitase_4Fe-4S_BS"/>
</dbReference>
<dbReference type="InterPro" id="IPR036008">
    <property type="entry name" value="Aconitase_4Fe-4S_dom"/>
</dbReference>
<dbReference type="InterPro" id="IPR050067">
    <property type="entry name" value="IPM_dehydratase_rel_enz"/>
</dbReference>
<dbReference type="InterPro" id="IPR033941">
    <property type="entry name" value="IPMI_cat"/>
</dbReference>
<dbReference type="NCBIfam" id="TIGR00170">
    <property type="entry name" value="leuC"/>
    <property type="match status" value="1"/>
</dbReference>
<dbReference type="NCBIfam" id="NF004016">
    <property type="entry name" value="PRK05478.1"/>
    <property type="match status" value="1"/>
</dbReference>
<dbReference type="NCBIfam" id="NF009116">
    <property type="entry name" value="PRK12466.1"/>
    <property type="match status" value="1"/>
</dbReference>
<dbReference type="PANTHER" id="PTHR43822:SF9">
    <property type="entry name" value="3-ISOPROPYLMALATE DEHYDRATASE"/>
    <property type="match status" value="1"/>
</dbReference>
<dbReference type="PANTHER" id="PTHR43822">
    <property type="entry name" value="HOMOACONITASE, MITOCHONDRIAL-RELATED"/>
    <property type="match status" value="1"/>
</dbReference>
<dbReference type="Pfam" id="PF00330">
    <property type="entry name" value="Aconitase"/>
    <property type="match status" value="1"/>
</dbReference>
<dbReference type="PRINTS" id="PR00415">
    <property type="entry name" value="ACONITASE"/>
</dbReference>
<dbReference type="SUPFAM" id="SSF53732">
    <property type="entry name" value="Aconitase iron-sulfur domain"/>
    <property type="match status" value="1"/>
</dbReference>
<dbReference type="PROSITE" id="PS00450">
    <property type="entry name" value="ACONITASE_1"/>
    <property type="match status" value="1"/>
</dbReference>
<dbReference type="PROSITE" id="PS01244">
    <property type="entry name" value="ACONITASE_2"/>
    <property type="match status" value="1"/>
</dbReference>
<reference key="1">
    <citation type="journal article" date="2002" name="Environ. Microbiol.">
        <title>Complete genome sequence and comparative analysis of the metabolically versatile Pseudomonas putida KT2440.</title>
        <authorList>
            <person name="Nelson K.E."/>
            <person name="Weinel C."/>
            <person name="Paulsen I.T."/>
            <person name="Dodson R.J."/>
            <person name="Hilbert H."/>
            <person name="Martins dos Santos V.A.P."/>
            <person name="Fouts D.E."/>
            <person name="Gill S.R."/>
            <person name="Pop M."/>
            <person name="Holmes M."/>
            <person name="Brinkac L.M."/>
            <person name="Beanan M.J."/>
            <person name="DeBoy R.T."/>
            <person name="Daugherty S.C."/>
            <person name="Kolonay J.F."/>
            <person name="Madupu R."/>
            <person name="Nelson W.C."/>
            <person name="White O."/>
            <person name="Peterson J.D."/>
            <person name="Khouri H.M."/>
            <person name="Hance I."/>
            <person name="Chris Lee P."/>
            <person name="Holtzapple E.K."/>
            <person name="Scanlan D."/>
            <person name="Tran K."/>
            <person name="Moazzez A."/>
            <person name="Utterback T.R."/>
            <person name="Rizzo M."/>
            <person name="Lee K."/>
            <person name="Kosack D."/>
            <person name="Moestl D."/>
            <person name="Wedler H."/>
            <person name="Lauber J."/>
            <person name="Stjepandic D."/>
            <person name="Hoheisel J."/>
            <person name="Straetz M."/>
            <person name="Heim S."/>
            <person name="Kiewitz C."/>
            <person name="Eisen J.A."/>
            <person name="Timmis K.N."/>
            <person name="Duesterhoeft A."/>
            <person name="Tuemmler B."/>
            <person name="Fraser C.M."/>
        </authorList>
    </citation>
    <scope>NUCLEOTIDE SEQUENCE [LARGE SCALE GENOMIC DNA]</scope>
    <source>
        <strain>ATCC 47054 / DSM 6125 / CFBP 8728 / NCIMB 11950 / KT2440</strain>
    </source>
</reference>
<name>LEUC_PSEPK</name>
<keyword id="KW-0004">4Fe-4S</keyword>
<keyword id="KW-0028">Amino-acid biosynthesis</keyword>
<keyword id="KW-0100">Branched-chain amino acid biosynthesis</keyword>
<keyword id="KW-0408">Iron</keyword>
<keyword id="KW-0411">Iron-sulfur</keyword>
<keyword id="KW-0432">Leucine biosynthesis</keyword>
<keyword id="KW-0456">Lyase</keyword>
<keyword id="KW-0479">Metal-binding</keyword>
<keyword id="KW-1185">Reference proteome</keyword>
<organism>
    <name type="scientific">Pseudomonas putida (strain ATCC 47054 / DSM 6125 / CFBP 8728 / NCIMB 11950 / KT2440)</name>
    <dbReference type="NCBI Taxonomy" id="160488"/>
    <lineage>
        <taxon>Bacteria</taxon>
        <taxon>Pseudomonadati</taxon>
        <taxon>Pseudomonadota</taxon>
        <taxon>Gammaproteobacteria</taxon>
        <taxon>Pseudomonadales</taxon>
        <taxon>Pseudomonadaceae</taxon>
        <taxon>Pseudomonas</taxon>
    </lineage>
</organism>